<protein>
    <recommendedName>
        <fullName evidence="1">Glutamyl-tRNA(Gln) amidotransferase subunit A</fullName>
        <shortName evidence="1">Glu-ADT subunit A</shortName>
        <ecNumber evidence="1">6.3.5.7</ecNumber>
    </recommendedName>
</protein>
<reference key="1">
    <citation type="journal article" date="2003" name="Nature">
        <title>Genome divergence in two Prochlorococcus ecotypes reflects oceanic niche differentiation.</title>
        <authorList>
            <person name="Rocap G."/>
            <person name="Larimer F.W."/>
            <person name="Lamerdin J.E."/>
            <person name="Malfatti S."/>
            <person name="Chain P."/>
            <person name="Ahlgren N.A."/>
            <person name="Arellano A."/>
            <person name="Coleman M."/>
            <person name="Hauser L."/>
            <person name="Hess W.R."/>
            <person name="Johnson Z.I."/>
            <person name="Land M.L."/>
            <person name="Lindell D."/>
            <person name="Post A.F."/>
            <person name="Regala W."/>
            <person name="Shah M."/>
            <person name="Shaw S.L."/>
            <person name="Steglich C."/>
            <person name="Sullivan M.B."/>
            <person name="Ting C.S."/>
            <person name="Tolonen A."/>
            <person name="Webb E.A."/>
            <person name="Zinser E.R."/>
            <person name="Chisholm S.W."/>
        </authorList>
    </citation>
    <scope>NUCLEOTIDE SEQUENCE [LARGE SCALE GENOMIC DNA]</scope>
    <source>
        <strain>MIT 9313</strain>
    </source>
</reference>
<name>GATA_PROMM</name>
<organism>
    <name type="scientific">Prochlorococcus marinus (strain MIT 9313)</name>
    <dbReference type="NCBI Taxonomy" id="74547"/>
    <lineage>
        <taxon>Bacteria</taxon>
        <taxon>Bacillati</taxon>
        <taxon>Cyanobacteriota</taxon>
        <taxon>Cyanophyceae</taxon>
        <taxon>Synechococcales</taxon>
        <taxon>Prochlorococcaceae</taxon>
        <taxon>Prochlorococcus</taxon>
    </lineage>
</organism>
<dbReference type="EC" id="6.3.5.7" evidence="1"/>
<dbReference type="EMBL" id="BX548175">
    <property type="protein sequence ID" value="CAE20823.1"/>
    <property type="molecule type" value="Genomic_DNA"/>
</dbReference>
<dbReference type="RefSeq" id="WP_011130027.1">
    <property type="nucleotide sequence ID" value="NC_005071.1"/>
</dbReference>
<dbReference type="SMR" id="Q7V7T6"/>
<dbReference type="KEGG" id="pmt:PMT_0648"/>
<dbReference type="eggNOG" id="COG0154">
    <property type="taxonomic scope" value="Bacteria"/>
</dbReference>
<dbReference type="HOGENOM" id="CLU_009600_0_3_3"/>
<dbReference type="OrthoDB" id="9811471at2"/>
<dbReference type="Proteomes" id="UP000001423">
    <property type="component" value="Chromosome"/>
</dbReference>
<dbReference type="GO" id="GO:0030956">
    <property type="term" value="C:glutamyl-tRNA(Gln) amidotransferase complex"/>
    <property type="evidence" value="ECO:0007669"/>
    <property type="project" value="InterPro"/>
</dbReference>
<dbReference type="GO" id="GO:0005524">
    <property type="term" value="F:ATP binding"/>
    <property type="evidence" value="ECO:0007669"/>
    <property type="project" value="UniProtKB-KW"/>
</dbReference>
<dbReference type="GO" id="GO:0050567">
    <property type="term" value="F:glutaminyl-tRNA synthase (glutamine-hydrolyzing) activity"/>
    <property type="evidence" value="ECO:0007669"/>
    <property type="project" value="UniProtKB-UniRule"/>
</dbReference>
<dbReference type="GO" id="GO:0006412">
    <property type="term" value="P:translation"/>
    <property type="evidence" value="ECO:0007669"/>
    <property type="project" value="UniProtKB-UniRule"/>
</dbReference>
<dbReference type="Gene3D" id="3.90.1300.10">
    <property type="entry name" value="Amidase signature (AS) domain"/>
    <property type="match status" value="1"/>
</dbReference>
<dbReference type="HAMAP" id="MF_00120">
    <property type="entry name" value="GatA"/>
    <property type="match status" value="1"/>
</dbReference>
<dbReference type="InterPro" id="IPR000120">
    <property type="entry name" value="Amidase"/>
</dbReference>
<dbReference type="InterPro" id="IPR020556">
    <property type="entry name" value="Amidase_CS"/>
</dbReference>
<dbReference type="InterPro" id="IPR023631">
    <property type="entry name" value="Amidase_dom"/>
</dbReference>
<dbReference type="InterPro" id="IPR036928">
    <property type="entry name" value="AS_sf"/>
</dbReference>
<dbReference type="InterPro" id="IPR004412">
    <property type="entry name" value="GatA"/>
</dbReference>
<dbReference type="NCBIfam" id="TIGR00132">
    <property type="entry name" value="gatA"/>
    <property type="match status" value="1"/>
</dbReference>
<dbReference type="PANTHER" id="PTHR11895:SF151">
    <property type="entry name" value="GLUTAMYL-TRNA(GLN) AMIDOTRANSFERASE SUBUNIT A"/>
    <property type="match status" value="1"/>
</dbReference>
<dbReference type="PANTHER" id="PTHR11895">
    <property type="entry name" value="TRANSAMIDASE"/>
    <property type="match status" value="1"/>
</dbReference>
<dbReference type="Pfam" id="PF01425">
    <property type="entry name" value="Amidase"/>
    <property type="match status" value="1"/>
</dbReference>
<dbReference type="SUPFAM" id="SSF75304">
    <property type="entry name" value="Amidase signature (AS) enzymes"/>
    <property type="match status" value="1"/>
</dbReference>
<dbReference type="PROSITE" id="PS00571">
    <property type="entry name" value="AMIDASES"/>
    <property type="match status" value="1"/>
</dbReference>
<gene>
    <name evidence="1" type="primary">gatA</name>
    <name type="ordered locus">PMT_0648</name>
</gene>
<comment type="function">
    <text evidence="1">Allows the formation of correctly charged Gln-tRNA(Gln) through the transamidation of misacylated Glu-tRNA(Gln) in organisms which lack glutaminyl-tRNA synthetase. The reaction takes place in the presence of glutamine and ATP through an activated gamma-phospho-Glu-tRNA(Gln).</text>
</comment>
<comment type="catalytic activity">
    <reaction evidence="1">
        <text>L-glutamyl-tRNA(Gln) + L-glutamine + ATP + H2O = L-glutaminyl-tRNA(Gln) + L-glutamate + ADP + phosphate + H(+)</text>
        <dbReference type="Rhea" id="RHEA:17521"/>
        <dbReference type="Rhea" id="RHEA-COMP:9681"/>
        <dbReference type="Rhea" id="RHEA-COMP:9684"/>
        <dbReference type="ChEBI" id="CHEBI:15377"/>
        <dbReference type="ChEBI" id="CHEBI:15378"/>
        <dbReference type="ChEBI" id="CHEBI:29985"/>
        <dbReference type="ChEBI" id="CHEBI:30616"/>
        <dbReference type="ChEBI" id="CHEBI:43474"/>
        <dbReference type="ChEBI" id="CHEBI:58359"/>
        <dbReference type="ChEBI" id="CHEBI:78520"/>
        <dbReference type="ChEBI" id="CHEBI:78521"/>
        <dbReference type="ChEBI" id="CHEBI:456216"/>
        <dbReference type="EC" id="6.3.5.7"/>
    </reaction>
</comment>
<comment type="subunit">
    <text evidence="1">Heterotrimer of A, B and C subunits.</text>
</comment>
<comment type="similarity">
    <text evidence="1">Belongs to the amidase family. GatA subfamily.</text>
</comment>
<feature type="chain" id="PRO_0000105187" description="Glutamyl-tRNA(Gln) amidotransferase subunit A">
    <location>
        <begin position="1"/>
        <end position="486"/>
    </location>
</feature>
<feature type="active site" description="Charge relay system" evidence="1">
    <location>
        <position position="74"/>
    </location>
</feature>
<feature type="active site" description="Charge relay system" evidence="1">
    <location>
        <position position="149"/>
    </location>
</feature>
<feature type="active site" description="Acyl-ester intermediate" evidence="1">
    <location>
        <position position="173"/>
    </location>
</feature>
<accession>Q7V7T6</accession>
<proteinExistence type="inferred from homology"/>
<sequence length="486" mass="51394">MAIAEWRQQLKLGEVSARELTDHQLARIAVVDPTLHAFLDITADRARADADRIDEALAAGESLPPLAGVPLAIKDNLCTKGIRTTCSSRMLETFVPPYESTVTERLWQAGAVLLGKTNLDEFAMGSSTETSAFGATSNPWDISRVPGGSSGGSAAAVAAGECMAALGSDTGGSIRQPASFCGVVGLKPTYGRVSRWGLVAFASSLDQVGPFTTNVADAAELLQVIAGSDPRDSTCLNVAVPDYCSALSQPMSGVRIGLIRECFDQNGLDAQVKRTVLTAAEKLQSLGAELVEVSCPRFSDGIATYYVIAPSEASANLARYDGVKYGYRAEGADALAAMTARSRAEGFGSEVQRRILIGTYALSAGYMDAYYKKAQQVRTLIRQDFDAAFQTVDVLLTPTSPTTAFKAGAHADDPLAMYLADLLTIPANLAGLPAISLPCGFDDDGLPIGVQLIANVLEESRLLQVAFHYEQAANVMANHPQGNFIP</sequence>
<keyword id="KW-0067">ATP-binding</keyword>
<keyword id="KW-0436">Ligase</keyword>
<keyword id="KW-0547">Nucleotide-binding</keyword>
<keyword id="KW-0648">Protein biosynthesis</keyword>
<keyword id="KW-1185">Reference proteome</keyword>
<evidence type="ECO:0000255" key="1">
    <source>
        <dbReference type="HAMAP-Rule" id="MF_00120"/>
    </source>
</evidence>